<evidence type="ECO:0000255" key="1">
    <source>
        <dbReference type="HAMAP-Rule" id="MF_02006"/>
    </source>
</evidence>
<name>SYY_NOVAD</name>
<sequence>MTEYASSLLRLLSERGYIHQMTDADALDALAAKQVIPGYIGFDPTAPSLHVGSMVQIMLLRRLQQAGHKPIVLMGGGTGKIGDPSFKDEARKLMTNDVIAANVASIKTVFERFLTFGDGPTDAVMVDNADWLDRLEYIPFLREVGQHFSVNRMLSFDSVKQRLDREQSLSFLEFNYMILQAYDFRELSQRHACRLQMGGSDQWGNIVNGIELTRRMDGVEVFGVTTPLLTTADGSKMGKTAAGAVWLNEDALPAWDFWQYWRNTDDRDVGKFLRLFTDLPLDEIARLEALEGSEINAAKVVLANEVTRLVRGEEAAKAAEATAAATFAGGGLGQDLPTLSVGESEIGIVDALVGLGFAASRGEAKRLVAGGGARVDGEPVTDEGFRILVNDKEIRVSSGKKKHGILRKA</sequence>
<accession>Q2G6I4</accession>
<comment type="function">
    <text evidence="1">Catalyzes the attachment of tyrosine to tRNA(Tyr) in a two-step reaction: tyrosine is first activated by ATP to form Tyr-AMP and then transferred to the acceptor end of tRNA(Tyr).</text>
</comment>
<comment type="catalytic activity">
    <reaction evidence="1">
        <text>tRNA(Tyr) + L-tyrosine + ATP = L-tyrosyl-tRNA(Tyr) + AMP + diphosphate + H(+)</text>
        <dbReference type="Rhea" id="RHEA:10220"/>
        <dbReference type="Rhea" id="RHEA-COMP:9706"/>
        <dbReference type="Rhea" id="RHEA-COMP:9707"/>
        <dbReference type="ChEBI" id="CHEBI:15378"/>
        <dbReference type="ChEBI" id="CHEBI:30616"/>
        <dbReference type="ChEBI" id="CHEBI:33019"/>
        <dbReference type="ChEBI" id="CHEBI:58315"/>
        <dbReference type="ChEBI" id="CHEBI:78442"/>
        <dbReference type="ChEBI" id="CHEBI:78536"/>
        <dbReference type="ChEBI" id="CHEBI:456215"/>
        <dbReference type="EC" id="6.1.1.1"/>
    </reaction>
</comment>
<comment type="subunit">
    <text evidence="1">Homodimer.</text>
</comment>
<comment type="subcellular location">
    <subcellularLocation>
        <location evidence="1">Cytoplasm</location>
    </subcellularLocation>
</comment>
<comment type="similarity">
    <text evidence="1">Belongs to the class-I aminoacyl-tRNA synthetase family. TyrS type 1 subfamily.</text>
</comment>
<gene>
    <name evidence="1" type="primary">tyrS</name>
    <name type="ordered locus">Saro_2100</name>
</gene>
<reference key="1">
    <citation type="submission" date="2006-01" db="EMBL/GenBank/DDBJ databases">
        <title>Complete sequence of Novosphingobium aromaticivorans DSM 12444.</title>
        <authorList>
            <consortium name="US DOE Joint Genome Institute"/>
            <person name="Copeland A."/>
            <person name="Lucas S."/>
            <person name="Lapidus A."/>
            <person name="Barry K."/>
            <person name="Detter J.C."/>
            <person name="Glavina T."/>
            <person name="Hammon N."/>
            <person name="Israni S."/>
            <person name="Pitluck S."/>
            <person name="Chain P."/>
            <person name="Malfatti S."/>
            <person name="Shin M."/>
            <person name="Vergez L."/>
            <person name="Schmutz J."/>
            <person name="Larimer F."/>
            <person name="Land M."/>
            <person name="Kyrpides N."/>
            <person name="Ivanova N."/>
            <person name="Fredrickson J."/>
            <person name="Balkwill D."/>
            <person name="Romine M.F."/>
            <person name="Richardson P."/>
        </authorList>
    </citation>
    <scope>NUCLEOTIDE SEQUENCE [LARGE SCALE GENOMIC DNA]</scope>
    <source>
        <strain>ATCC 700278 / DSM 12444 / CCUG 56034 / CIP 105152 / NBRC 16084 / F199</strain>
    </source>
</reference>
<feature type="chain" id="PRO_0000234744" description="Tyrosine--tRNA ligase">
    <location>
        <begin position="1"/>
        <end position="409"/>
    </location>
</feature>
<feature type="domain" description="S4 RNA-binding" evidence="1">
    <location>
        <begin position="346"/>
        <end position="409"/>
    </location>
</feature>
<feature type="short sequence motif" description="'HIGH' region">
    <location>
        <begin position="44"/>
        <end position="53"/>
    </location>
</feature>
<feature type="short sequence motif" description="'KMSKS' region">
    <location>
        <begin position="236"/>
        <end position="240"/>
    </location>
</feature>
<feature type="binding site" evidence="1">
    <location>
        <position position="39"/>
    </location>
    <ligand>
        <name>L-tyrosine</name>
        <dbReference type="ChEBI" id="CHEBI:58315"/>
    </ligand>
</feature>
<feature type="binding site" evidence="1">
    <location>
        <position position="176"/>
    </location>
    <ligand>
        <name>L-tyrosine</name>
        <dbReference type="ChEBI" id="CHEBI:58315"/>
    </ligand>
</feature>
<feature type="binding site" evidence="1">
    <location>
        <position position="180"/>
    </location>
    <ligand>
        <name>L-tyrosine</name>
        <dbReference type="ChEBI" id="CHEBI:58315"/>
    </ligand>
</feature>
<feature type="binding site" evidence="1">
    <location>
        <position position="239"/>
    </location>
    <ligand>
        <name>ATP</name>
        <dbReference type="ChEBI" id="CHEBI:30616"/>
    </ligand>
</feature>
<protein>
    <recommendedName>
        <fullName evidence="1">Tyrosine--tRNA ligase</fullName>
        <ecNumber evidence="1">6.1.1.1</ecNumber>
    </recommendedName>
    <alternativeName>
        <fullName evidence="1">Tyrosyl-tRNA synthetase</fullName>
        <shortName evidence="1">TyrRS</shortName>
    </alternativeName>
</protein>
<organism>
    <name type="scientific">Novosphingobium aromaticivorans (strain ATCC 700278 / DSM 12444 / CCUG 56034 / CIP 105152 / NBRC 16084 / F199)</name>
    <dbReference type="NCBI Taxonomy" id="279238"/>
    <lineage>
        <taxon>Bacteria</taxon>
        <taxon>Pseudomonadati</taxon>
        <taxon>Pseudomonadota</taxon>
        <taxon>Alphaproteobacteria</taxon>
        <taxon>Sphingomonadales</taxon>
        <taxon>Sphingomonadaceae</taxon>
        <taxon>Novosphingobium</taxon>
    </lineage>
</organism>
<proteinExistence type="inferred from homology"/>
<dbReference type="EC" id="6.1.1.1" evidence="1"/>
<dbReference type="EMBL" id="CP000248">
    <property type="protein sequence ID" value="ABD26539.1"/>
    <property type="molecule type" value="Genomic_DNA"/>
</dbReference>
<dbReference type="RefSeq" id="WP_011445748.1">
    <property type="nucleotide sequence ID" value="NC_007794.1"/>
</dbReference>
<dbReference type="SMR" id="Q2G6I4"/>
<dbReference type="STRING" id="279238.Saro_2100"/>
<dbReference type="KEGG" id="nar:Saro_2100"/>
<dbReference type="eggNOG" id="COG0162">
    <property type="taxonomic scope" value="Bacteria"/>
</dbReference>
<dbReference type="HOGENOM" id="CLU_024003_0_3_5"/>
<dbReference type="Proteomes" id="UP000009134">
    <property type="component" value="Chromosome"/>
</dbReference>
<dbReference type="GO" id="GO:0005829">
    <property type="term" value="C:cytosol"/>
    <property type="evidence" value="ECO:0007669"/>
    <property type="project" value="TreeGrafter"/>
</dbReference>
<dbReference type="GO" id="GO:0005524">
    <property type="term" value="F:ATP binding"/>
    <property type="evidence" value="ECO:0007669"/>
    <property type="project" value="UniProtKB-UniRule"/>
</dbReference>
<dbReference type="GO" id="GO:0003723">
    <property type="term" value="F:RNA binding"/>
    <property type="evidence" value="ECO:0007669"/>
    <property type="project" value="UniProtKB-KW"/>
</dbReference>
<dbReference type="GO" id="GO:0004831">
    <property type="term" value="F:tyrosine-tRNA ligase activity"/>
    <property type="evidence" value="ECO:0007669"/>
    <property type="project" value="UniProtKB-UniRule"/>
</dbReference>
<dbReference type="GO" id="GO:0006437">
    <property type="term" value="P:tyrosyl-tRNA aminoacylation"/>
    <property type="evidence" value="ECO:0007669"/>
    <property type="project" value="UniProtKB-UniRule"/>
</dbReference>
<dbReference type="CDD" id="cd00165">
    <property type="entry name" value="S4"/>
    <property type="match status" value="1"/>
</dbReference>
<dbReference type="CDD" id="cd00805">
    <property type="entry name" value="TyrRS_core"/>
    <property type="match status" value="1"/>
</dbReference>
<dbReference type="FunFam" id="1.10.240.10:FF:000001">
    <property type="entry name" value="Tyrosine--tRNA ligase"/>
    <property type="match status" value="1"/>
</dbReference>
<dbReference type="FunFam" id="3.40.50.620:FF:000008">
    <property type="entry name" value="Tyrosine--tRNA ligase"/>
    <property type="match status" value="1"/>
</dbReference>
<dbReference type="Gene3D" id="3.40.50.620">
    <property type="entry name" value="HUPs"/>
    <property type="match status" value="1"/>
</dbReference>
<dbReference type="Gene3D" id="3.10.290.10">
    <property type="entry name" value="RNA-binding S4 domain"/>
    <property type="match status" value="1"/>
</dbReference>
<dbReference type="Gene3D" id="1.10.240.10">
    <property type="entry name" value="Tyrosyl-Transfer RNA Synthetase"/>
    <property type="match status" value="1"/>
</dbReference>
<dbReference type="HAMAP" id="MF_02006">
    <property type="entry name" value="Tyr_tRNA_synth_type1"/>
    <property type="match status" value="1"/>
</dbReference>
<dbReference type="InterPro" id="IPR002305">
    <property type="entry name" value="aa-tRNA-synth_Ic"/>
</dbReference>
<dbReference type="InterPro" id="IPR014729">
    <property type="entry name" value="Rossmann-like_a/b/a_fold"/>
</dbReference>
<dbReference type="InterPro" id="IPR002942">
    <property type="entry name" value="S4_RNA-bd"/>
</dbReference>
<dbReference type="InterPro" id="IPR036986">
    <property type="entry name" value="S4_RNA-bd_sf"/>
</dbReference>
<dbReference type="InterPro" id="IPR002307">
    <property type="entry name" value="Tyr-tRNA-ligase"/>
</dbReference>
<dbReference type="InterPro" id="IPR024088">
    <property type="entry name" value="Tyr-tRNA-ligase_bac-type"/>
</dbReference>
<dbReference type="InterPro" id="IPR024107">
    <property type="entry name" value="Tyr-tRNA-ligase_bac_1"/>
</dbReference>
<dbReference type="NCBIfam" id="TIGR00234">
    <property type="entry name" value="tyrS"/>
    <property type="match status" value="1"/>
</dbReference>
<dbReference type="PANTHER" id="PTHR11766:SF0">
    <property type="entry name" value="TYROSINE--TRNA LIGASE, MITOCHONDRIAL"/>
    <property type="match status" value="1"/>
</dbReference>
<dbReference type="PANTHER" id="PTHR11766">
    <property type="entry name" value="TYROSYL-TRNA SYNTHETASE"/>
    <property type="match status" value="1"/>
</dbReference>
<dbReference type="Pfam" id="PF01479">
    <property type="entry name" value="S4"/>
    <property type="match status" value="1"/>
</dbReference>
<dbReference type="Pfam" id="PF00579">
    <property type="entry name" value="tRNA-synt_1b"/>
    <property type="match status" value="1"/>
</dbReference>
<dbReference type="PRINTS" id="PR01040">
    <property type="entry name" value="TRNASYNTHTYR"/>
</dbReference>
<dbReference type="SUPFAM" id="SSF55174">
    <property type="entry name" value="Alpha-L RNA-binding motif"/>
    <property type="match status" value="1"/>
</dbReference>
<dbReference type="SUPFAM" id="SSF52374">
    <property type="entry name" value="Nucleotidylyl transferase"/>
    <property type="match status" value="1"/>
</dbReference>
<dbReference type="PROSITE" id="PS50889">
    <property type="entry name" value="S4"/>
    <property type="match status" value="1"/>
</dbReference>
<keyword id="KW-0030">Aminoacyl-tRNA synthetase</keyword>
<keyword id="KW-0067">ATP-binding</keyword>
<keyword id="KW-0963">Cytoplasm</keyword>
<keyword id="KW-0436">Ligase</keyword>
<keyword id="KW-0547">Nucleotide-binding</keyword>
<keyword id="KW-0648">Protein biosynthesis</keyword>
<keyword id="KW-1185">Reference proteome</keyword>
<keyword id="KW-0694">RNA-binding</keyword>